<keyword id="KW-1185">Reference proteome</keyword>
<keyword id="KW-0687">Ribonucleoprotein</keyword>
<keyword id="KW-0689">Ribosomal protein</keyword>
<dbReference type="EMBL" id="AE017125">
    <property type="protein sequence ID" value="AAP77095.1"/>
    <property type="molecule type" value="Genomic_DNA"/>
</dbReference>
<dbReference type="RefSeq" id="WP_011115340.1">
    <property type="nucleotide sequence ID" value="NC_004917.1"/>
</dbReference>
<dbReference type="SMR" id="Q7VIV6"/>
<dbReference type="STRING" id="235279.HH_0498"/>
<dbReference type="GeneID" id="78151734"/>
<dbReference type="KEGG" id="hhe:HH_0498"/>
<dbReference type="eggNOG" id="COG0102">
    <property type="taxonomic scope" value="Bacteria"/>
</dbReference>
<dbReference type="HOGENOM" id="CLU_082184_2_2_7"/>
<dbReference type="OrthoDB" id="9801330at2"/>
<dbReference type="Proteomes" id="UP000002495">
    <property type="component" value="Chromosome"/>
</dbReference>
<dbReference type="GO" id="GO:0022625">
    <property type="term" value="C:cytosolic large ribosomal subunit"/>
    <property type="evidence" value="ECO:0007669"/>
    <property type="project" value="TreeGrafter"/>
</dbReference>
<dbReference type="GO" id="GO:0003729">
    <property type="term" value="F:mRNA binding"/>
    <property type="evidence" value="ECO:0007669"/>
    <property type="project" value="TreeGrafter"/>
</dbReference>
<dbReference type="GO" id="GO:0003735">
    <property type="term" value="F:structural constituent of ribosome"/>
    <property type="evidence" value="ECO:0007669"/>
    <property type="project" value="InterPro"/>
</dbReference>
<dbReference type="GO" id="GO:0017148">
    <property type="term" value="P:negative regulation of translation"/>
    <property type="evidence" value="ECO:0007669"/>
    <property type="project" value="TreeGrafter"/>
</dbReference>
<dbReference type="GO" id="GO:0006412">
    <property type="term" value="P:translation"/>
    <property type="evidence" value="ECO:0007669"/>
    <property type="project" value="UniProtKB-UniRule"/>
</dbReference>
<dbReference type="CDD" id="cd00392">
    <property type="entry name" value="Ribosomal_L13"/>
    <property type="match status" value="1"/>
</dbReference>
<dbReference type="Gene3D" id="3.90.1180.10">
    <property type="entry name" value="Ribosomal protein L13"/>
    <property type="match status" value="1"/>
</dbReference>
<dbReference type="HAMAP" id="MF_01366">
    <property type="entry name" value="Ribosomal_uL13"/>
    <property type="match status" value="1"/>
</dbReference>
<dbReference type="InterPro" id="IPR005822">
    <property type="entry name" value="Ribosomal_uL13"/>
</dbReference>
<dbReference type="InterPro" id="IPR005823">
    <property type="entry name" value="Ribosomal_uL13_bac-type"/>
</dbReference>
<dbReference type="InterPro" id="IPR023563">
    <property type="entry name" value="Ribosomal_uL13_CS"/>
</dbReference>
<dbReference type="InterPro" id="IPR036899">
    <property type="entry name" value="Ribosomal_uL13_sf"/>
</dbReference>
<dbReference type="NCBIfam" id="TIGR01066">
    <property type="entry name" value="rplM_bact"/>
    <property type="match status" value="1"/>
</dbReference>
<dbReference type="PANTHER" id="PTHR11545:SF2">
    <property type="entry name" value="LARGE RIBOSOMAL SUBUNIT PROTEIN UL13M"/>
    <property type="match status" value="1"/>
</dbReference>
<dbReference type="PANTHER" id="PTHR11545">
    <property type="entry name" value="RIBOSOMAL PROTEIN L13"/>
    <property type="match status" value="1"/>
</dbReference>
<dbReference type="Pfam" id="PF00572">
    <property type="entry name" value="Ribosomal_L13"/>
    <property type="match status" value="1"/>
</dbReference>
<dbReference type="PIRSF" id="PIRSF002181">
    <property type="entry name" value="Ribosomal_L13"/>
    <property type="match status" value="1"/>
</dbReference>
<dbReference type="SUPFAM" id="SSF52161">
    <property type="entry name" value="Ribosomal protein L13"/>
    <property type="match status" value="1"/>
</dbReference>
<dbReference type="PROSITE" id="PS00783">
    <property type="entry name" value="RIBOSOMAL_L13"/>
    <property type="match status" value="1"/>
</dbReference>
<name>RL13_HELHP</name>
<accession>Q7VIV6</accession>
<protein>
    <recommendedName>
        <fullName evidence="1">Large ribosomal subunit protein uL13</fullName>
    </recommendedName>
    <alternativeName>
        <fullName evidence="2">50S ribosomal protein L13</fullName>
    </alternativeName>
</protein>
<reference key="1">
    <citation type="journal article" date="2003" name="Proc. Natl. Acad. Sci. U.S.A.">
        <title>The complete genome sequence of the carcinogenic bacterium Helicobacter hepaticus.</title>
        <authorList>
            <person name="Suerbaum S."/>
            <person name="Josenhans C."/>
            <person name="Sterzenbach T."/>
            <person name="Drescher B."/>
            <person name="Brandt P."/>
            <person name="Bell M."/>
            <person name="Droege M."/>
            <person name="Fartmann B."/>
            <person name="Fischer H.-P."/>
            <person name="Ge Z."/>
            <person name="Hoerster A."/>
            <person name="Holland R."/>
            <person name="Klein K."/>
            <person name="Koenig J."/>
            <person name="Macko L."/>
            <person name="Mendz G.L."/>
            <person name="Nyakatura G."/>
            <person name="Schauer D.B."/>
            <person name="Shen Z."/>
            <person name="Weber J."/>
            <person name="Frosch M."/>
            <person name="Fox J.G."/>
        </authorList>
    </citation>
    <scope>NUCLEOTIDE SEQUENCE [LARGE SCALE GENOMIC DNA]</scope>
    <source>
        <strain>ATCC 51449 / 3B1</strain>
    </source>
</reference>
<comment type="function">
    <text evidence="1">This protein is one of the early assembly proteins of the 50S ribosomal subunit, although it is not seen to bind rRNA by itself. It is important during the early stages of 50S assembly.</text>
</comment>
<comment type="subunit">
    <text evidence="1">Part of the 50S ribosomal subunit.</text>
</comment>
<comment type="similarity">
    <text evidence="1">Belongs to the universal ribosomal protein uL13 family.</text>
</comment>
<evidence type="ECO:0000255" key="1">
    <source>
        <dbReference type="HAMAP-Rule" id="MF_01366"/>
    </source>
</evidence>
<evidence type="ECO:0000305" key="2"/>
<gene>
    <name evidence="1" type="primary">rplM</name>
    <name type="ordered locus">HH_0498</name>
</gene>
<organism>
    <name type="scientific">Helicobacter hepaticus (strain ATCC 51449 / 3B1)</name>
    <dbReference type="NCBI Taxonomy" id="235279"/>
    <lineage>
        <taxon>Bacteria</taxon>
        <taxon>Pseudomonadati</taxon>
        <taxon>Campylobacterota</taxon>
        <taxon>Epsilonproteobacteria</taxon>
        <taxon>Campylobacterales</taxon>
        <taxon>Helicobacteraceae</taxon>
        <taxon>Helicobacter</taxon>
    </lineage>
</organism>
<feature type="chain" id="PRO_1000055391" description="Large ribosomal subunit protein uL13">
    <location>
        <begin position="1"/>
        <end position="142"/>
    </location>
</feature>
<proteinExistence type="inferred from homology"/>
<sequence length="142" mass="16190">MELTKIATQNDINRQWIVLDAKDKVFGRLITEIATLLRGKHKPCFTPHIDCGDFVVIINATEVKFTGMKLKDKEYFTHSGYFGSTKSKTLQEMLEKTPEKLYHLAVRGMLPKNKLGRAMLKKLKVYRGSEHPHSAQVAKSSK</sequence>